<keyword id="KW-0030">Aminoacyl-tRNA synthetase</keyword>
<keyword id="KW-0067">ATP-binding</keyword>
<keyword id="KW-0963">Cytoplasm</keyword>
<keyword id="KW-0436">Ligase</keyword>
<keyword id="KW-0547">Nucleotide-binding</keyword>
<keyword id="KW-0648">Protein biosynthesis</keyword>
<name>SYP_VIBA3</name>
<gene>
    <name evidence="1" type="primary">proS</name>
    <name type="ordered locus">VS_2368</name>
</gene>
<accession>B7VIT2</accession>
<sequence>MRTSNYLLSTLKETPNDAEVISHQLMLRAGMIRKLASGLYTWLPTGLRVLRKVENIVRQEIDNAGAVEILMPVVQPFELWEETGRSEKMGPELLRFTDRHSRPFVLSPTAEEVVTSLVRNEISSYKQLPLNLYQIQTKFRDERRPRFGVMRAREFSMMDAYSFDIDKEGLEKSYQAMHDAYCKAFDRMGLEYRPVLADSGAIGGSGSQEFHVLAESGEDLIAFSSESDYAANIEKAEALAPTEEVAAPTQEMELVDTPNAKTIAELVEQHGLAIEKTVKTLFVKASDEVEADIIALIVRGDHELNEVKAENLPQIASPLEMASEEEIRALVGAGPGSLGPVGLELPFIADRSVAVMSDFGAGANVDGKHYFGINWGRDVELAQVEDLRNVVEGDLSPCGQGTIQLKRGIEVGHIFQLGNTYSKAMNCNVLGPDGKSVILEMGCYGIGVSRVVASAIEQNHDKFGITWPDALAPFQVAIVPMNMHKSERVKEAAEKLYAELTAMGIEVLFDDRKERPGVMFKDIELVGIPHTIVIGDRSMDEGNFEYKNRRTGDKEAIAMDTVIEHLKAQLA</sequence>
<reference key="1">
    <citation type="submission" date="2009-02" db="EMBL/GenBank/DDBJ databases">
        <title>Vibrio splendidus str. LGP32 complete genome.</title>
        <authorList>
            <person name="Mazel D."/>
            <person name="Le Roux F."/>
        </authorList>
    </citation>
    <scope>NUCLEOTIDE SEQUENCE [LARGE SCALE GENOMIC DNA]</scope>
    <source>
        <strain>LGP32</strain>
    </source>
</reference>
<protein>
    <recommendedName>
        <fullName evidence="1">Proline--tRNA ligase</fullName>
        <ecNumber evidence="1">6.1.1.15</ecNumber>
    </recommendedName>
    <alternativeName>
        <fullName evidence="1">Prolyl-tRNA synthetase</fullName>
        <shortName evidence="1">ProRS</shortName>
    </alternativeName>
</protein>
<evidence type="ECO:0000255" key="1">
    <source>
        <dbReference type="HAMAP-Rule" id="MF_01569"/>
    </source>
</evidence>
<organism>
    <name type="scientific">Vibrio atlanticus (strain LGP32)</name>
    <name type="common">Vibrio splendidus (strain Mel32)</name>
    <dbReference type="NCBI Taxonomy" id="575788"/>
    <lineage>
        <taxon>Bacteria</taxon>
        <taxon>Pseudomonadati</taxon>
        <taxon>Pseudomonadota</taxon>
        <taxon>Gammaproteobacteria</taxon>
        <taxon>Vibrionales</taxon>
        <taxon>Vibrionaceae</taxon>
        <taxon>Vibrio</taxon>
    </lineage>
</organism>
<proteinExistence type="inferred from homology"/>
<comment type="function">
    <text evidence="1">Catalyzes the attachment of proline to tRNA(Pro) in a two-step reaction: proline is first activated by ATP to form Pro-AMP and then transferred to the acceptor end of tRNA(Pro). As ProRS can inadvertently accommodate and process non-cognate amino acids such as alanine and cysteine, to avoid such errors it has two additional distinct editing activities against alanine. One activity is designated as 'pretransfer' editing and involves the tRNA(Pro)-independent hydrolysis of activated Ala-AMP. The other activity is designated 'posttransfer' editing and involves deacylation of mischarged Ala-tRNA(Pro). The misacylated Cys-tRNA(Pro) is not edited by ProRS.</text>
</comment>
<comment type="catalytic activity">
    <reaction evidence="1">
        <text>tRNA(Pro) + L-proline + ATP = L-prolyl-tRNA(Pro) + AMP + diphosphate</text>
        <dbReference type="Rhea" id="RHEA:14305"/>
        <dbReference type="Rhea" id="RHEA-COMP:9700"/>
        <dbReference type="Rhea" id="RHEA-COMP:9702"/>
        <dbReference type="ChEBI" id="CHEBI:30616"/>
        <dbReference type="ChEBI" id="CHEBI:33019"/>
        <dbReference type="ChEBI" id="CHEBI:60039"/>
        <dbReference type="ChEBI" id="CHEBI:78442"/>
        <dbReference type="ChEBI" id="CHEBI:78532"/>
        <dbReference type="ChEBI" id="CHEBI:456215"/>
        <dbReference type="EC" id="6.1.1.15"/>
    </reaction>
</comment>
<comment type="subunit">
    <text evidence="1">Homodimer.</text>
</comment>
<comment type="subcellular location">
    <subcellularLocation>
        <location evidence="1">Cytoplasm</location>
    </subcellularLocation>
</comment>
<comment type="domain">
    <text evidence="1">Consists of three domains: the N-terminal catalytic domain, the editing domain and the C-terminal anticodon-binding domain.</text>
</comment>
<comment type="similarity">
    <text evidence="1">Belongs to the class-II aminoacyl-tRNA synthetase family. ProS type 1 subfamily.</text>
</comment>
<dbReference type="EC" id="6.1.1.15" evidence="1"/>
<dbReference type="EMBL" id="FM954972">
    <property type="protein sequence ID" value="CAV19528.1"/>
    <property type="molecule type" value="Genomic_DNA"/>
</dbReference>
<dbReference type="SMR" id="B7VIT2"/>
<dbReference type="STRING" id="575788.VS_2368"/>
<dbReference type="KEGG" id="vsp:VS_2368"/>
<dbReference type="PATRIC" id="fig|575788.5.peg.3631"/>
<dbReference type="eggNOG" id="COG0442">
    <property type="taxonomic scope" value="Bacteria"/>
</dbReference>
<dbReference type="HOGENOM" id="CLU_016739_0_0_6"/>
<dbReference type="Proteomes" id="UP000009100">
    <property type="component" value="Chromosome 1"/>
</dbReference>
<dbReference type="GO" id="GO:0005829">
    <property type="term" value="C:cytosol"/>
    <property type="evidence" value="ECO:0007669"/>
    <property type="project" value="TreeGrafter"/>
</dbReference>
<dbReference type="GO" id="GO:0002161">
    <property type="term" value="F:aminoacyl-tRNA deacylase activity"/>
    <property type="evidence" value="ECO:0007669"/>
    <property type="project" value="InterPro"/>
</dbReference>
<dbReference type="GO" id="GO:0005524">
    <property type="term" value="F:ATP binding"/>
    <property type="evidence" value="ECO:0007669"/>
    <property type="project" value="UniProtKB-UniRule"/>
</dbReference>
<dbReference type="GO" id="GO:0004827">
    <property type="term" value="F:proline-tRNA ligase activity"/>
    <property type="evidence" value="ECO:0007669"/>
    <property type="project" value="UniProtKB-UniRule"/>
</dbReference>
<dbReference type="GO" id="GO:0006433">
    <property type="term" value="P:prolyl-tRNA aminoacylation"/>
    <property type="evidence" value="ECO:0007669"/>
    <property type="project" value="UniProtKB-UniRule"/>
</dbReference>
<dbReference type="CDD" id="cd04334">
    <property type="entry name" value="ProRS-INS"/>
    <property type="match status" value="1"/>
</dbReference>
<dbReference type="CDD" id="cd00861">
    <property type="entry name" value="ProRS_anticodon_short"/>
    <property type="match status" value="1"/>
</dbReference>
<dbReference type="CDD" id="cd00779">
    <property type="entry name" value="ProRS_core_prok"/>
    <property type="match status" value="1"/>
</dbReference>
<dbReference type="FunFam" id="3.30.930.10:FF:000015">
    <property type="entry name" value="Proline--tRNA ligase"/>
    <property type="match status" value="1"/>
</dbReference>
<dbReference type="FunFam" id="3.30.930.10:FF:000043">
    <property type="entry name" value="Proline--tRNA ligase"/>
    <property type="match status" value="1"/>
</dbReference>
<dbReference type="FunFam" id="3.40.50.800:FF:000006">
    <property type="entry name" value="Proline--tRNA ligase"/>
    <property type="match status" value="1"/>
</dbReference>
<dbReference type="FunFam" id="3.90.960.10:FF:000001">
    <property type="entry name" value="Proline--tRNA ligase"/>
    <property type="match status" value="1"/>
</dbReference>
<dbReference type="Gene3D" id="3.40.50.800">
    <property type="entry name" value="Anticodon-binding domain"/>
    <property type="match status" value="1"/>
</dbReference>
<dbReference type="Gene3D" id="3.30.930.10">
    <property type="entry name" value="Bira Bifunctional Protein, Domain 2"/>
    <property type="match status" value="2"/>
</dbReference>
<dbReference type="HAMAP" id="MF_01569">
    <property type="entry name" value="Pro_tRNA_synth_type1"/>
    <property type="match status" value="1"/>
</dbReference>
<dbReference type="InterPro" id="IPR002314">
    <property type="entry name" value="aa-tRNA-synt_IIb"/>
</dbReference>
<dbReference type="InterPro" id="IPR006195">
    <property type="entry name" value="aa-tRNA-synth_II"/>
</dbReference>
<dbReference type="InterPro" id="IPR045864">
    <property type="entry name" value="aa-tRNA-synth_II/BPL/LPL"/>
</dbReference>
<dbReference type="InterPro" id="IPR004154">
    <property type="entry name" value="Anticodon-bd"/>
</dbReference>
<dbReference type="InterPro" id="IPR036621">
    <property type="entry name" value="Anticodon-bd_dom_sf"/>
</dbReference>
<dbReference type="InterPro" id="IPR002316">
    <property type="entry name" value="Pro-tRNA-ligase_IIa"/>
</dbReference>
<dbReference type="InterPro" id="IPR004500">
    <property type="entry name" value="Pro-tRNA-synth_IIa_bac-type"/>
</dbReference>
<dbReference type="InterPro" id="IPR023717">
    <property type="entry name" value="Pro-tRNA-Synthase_IIa_type1"/>
</dbReference>
<dbReference type="InterPro" id="IPR050062">
    <property type="entry name" value="Pro-tRNA_synthetase"/>
</dbReference>
<dbReference type="InterPro" id="IPR044140">
    <property type="entry name" value="ProRS_anticodon_short"/>
</dbReference>
<dbReference type="InterPro" id="IPR033730">
    <property type="entry name" value="ProRS_core_prok"/>
</dbReference>
<dbReference type="InterPro" id="IPR036754">
    <property type="entry name" value="YbaK/aa-tRNA-synt-asso_dom_sf"/>
</dbReference>
<dbReference type="InterPro" id="IPR007214">
    <property type="entry name" value="YbaK/aa-tRNA-synth-assoc-dom"/>
</dbReference>
<dbReference type="NCBIfam" id="NF006625">
    <property type="entry name" value="PRK09194.1"/>
    <property type="match status" value="1"/>
</dbReference>
<dbReference type="NCBIfam" id="TIGR00409">
    <property type="entry name" value="proS_fam_II"/>
    <property type="match status" value="1"/>
</dbReference>
<dbReference type="PANTHER" id="PTHR42753">
    <property type="entry name" value="MITOCHONDRIAL RIBOSOME PROTEIN L39/PROLYL-TRNA LIGASE FAMILY MEMBER"/>
    <property type="match status" value="1"/>
</dbReference>
<dbReference type="PANTHER" id="PTHR42753:SF2">
    <property type="entry name" value="PROLINE--TRNA LIGASE"/>
    <property type="match status" value="1"/>
</dbReference>
<dbReference type="Pfam" id="PF03129">
    <property type="entry name" value="HGTP_anticodon"/>
    <property type="match status" value="1"/>
</dbReference>
<dbReference type="Pfam" id="PF00587">
    <property type="entry name" value="tRNA-synt_2b"/>
    <property type="match status" value="1"/>
</dbReference>
<dbReference type="Pfam" id="PF04073">
    <property type="entry name" value="tRNA_edit"/>
    <property type="match status" value="1"/>
</dbReference>
<dbReference type="PIRSF" id="PIRSF001535">
    <property type="entry name" value="ProRS_1"/>
    <property type="match status" value="1"/>
</dbReference>
<dbReference type="PRINTS" id="PR01046">
    <property type="entry name" value="TRNASYNTHPRO"/>
</dbReference>
<dbReference type="SUPFAM" id="SSF52954">
    <property type="entry name" value="Class II aaRS ABD-related"/>
    <property type="match status" value="1"/>
</dbReference>
<dbReference type="SUPFAM" id="SSF55681">
    <property type="entry name" value="Class II aaRS and biotin synthetases"/>
    <property type="match status" value="1"/>
</dbReference>
<dbReference type="SUPFAM" id="SSF55826">
    <property type="entry name" value="YbaK/ProRS associated domain"/>
    <property type="match status" value="1"/>
</dbReference>
<dbReference type="PROSITE" id="PS50862">
    <property type="entry name" value="AA_TRNA_LIGASE_II"/>
    <property type="match status" value="1"/>
</dbReference>
<feature type="chain" id="PRO_1000185522" description="Proline--tRNA ligase">
    <location>
        <begin position="1"/>
        <end position="571"/>
    </location>
</feature>